<evidence type="ECO:0000255" key="1">
    <source>
        <dbReference type="HAMAP-Rule" id="MF_00741"/>
    </source>
</evidence>
<proteinExistence type="inferred from homology"/>
<comment type="catalytic activity">
    <reaction evidence="1">
        <text>2-formamido-N(1)-(5-O-phospho-beta-D-ribosyl)acetamidine + ATP = 5-amino-1-(5-phospho-beta-D-ribosyl)imidazole + ADP + phosphate + H(+)</text>
        <dbReference type="Rhea" id="RHEA:23032"/>
        <dbReference type="ChEBI" id="CHEBI:15378"/>
        <dbReference type="ChEBI" id="CHEBI:30616"/>
        <dbReference type="ChEBI" id="CHEBI:43474"/>
        <dbReference type="ChEBI" id="CHEBI:137981"/>
        <dbReference type="ChEBI" id="CHEBI:147287"/>
        <dbReference type="ChEBI" id="CHEBI:456216"/>
        <dbReference type="EC" id="6.3.3.1"/>
    </reaction>
</comment>
<comment type="pathway">
    <text evidence="1">Purine metabolism; IMP biosynthesis via de novo pathway; 5-amino-1-(5-phospho-D-ribosyl)imidazole from N(2)-formyl-N(1)-(5-phospho-D-ribosyl)glycinamide: step 2/2.</text>
</comment>
<comment type="subcellular location">
    <subcellularLocation>
        <location evidence="1">Cytoplasm</location>
    </subcellularLocation>
</comment>
<comment type="similarity">
    <text evidence="1">Belongs to the AIR synthase family.</text>
</comment>
<accession>B1KZ57</accession>
<protein>
    <recommendedName>
        <fullName evidence="1">Phosphoribosylformylglycinamidine cyclo-ligase</fullName>
        <ecNumber evidence="1">6.3.3.1</ecNumber>
    </recommendedName>
    <alternativeName>
        <fullName evidence="1">AIR synthase</fullName>
    </alternativeName>
    <alternativeName>
        <fullName evidence="1">AIRS</fullName>
    </alternativeName>
    <alternativeName>
        <fullName evidence="1">Phosphoribosyl-aminoimidazole synthetase</fullName>
    </alternativeName>
</protein>
<gene>
    <name evidence="1" type="primary">purM</name>
    <name type="ordered locus">CLK_2271</name>
</gene>
<keyword id="KW-0067">ATP-binding</keyword>
<keyword id="KW-0963">Cytoplasm</keyword>
<keyword id="KW-0436">Ligase</keyword>
<keyword id="KW-0547">Nucleotide-binding</keyword>
<keyword id="KW-0658">Purine biosynthesis</keyword>
<sequence>MVSYKEAGVNIEEGYKSVDLIKKHASKTFTKGVLNNLGSFAGMFELPKYKNPVLVSGTDGVGTKLDIAFRMKKYNTVGIDCVAMCVNDILCHGAKPLFFLDYIACGKLEAEVAAQLVEGVSNGCIQSECALIGGETAEMPGFYRDGEYDIAGFAVGIAEKDEIIDGSKIEDGDILIGIASSGPHSNGYSLIRKLVEDLHKDFAGDKIGNTLLAPTKIYVKPVMKLLEKYNIKGMAHVTGGGFYENIPRMFKDDFTAVINKKSYPIPNIFNHLMSLGVEENHMYNTFNMGIGFVLCVNEKDGENIIKDLIEMGEKGYKIGYVKKGDKSVELI</sequence>
<reference key="1">
    <citation type="journal article" date="2007" name="PLoS ONE">
        <title>Analysis of the neurotoxin complex genes in Clostridium botulinum A1-A4 and B1 strains: BoNT/A3, /Ba4 and /B1 clusters are located within plasmids.</title>
        <authorList>
            <person name="Smith T.J."/>
            <person name="Hill K.K."/>
            <person name="Foley B.T."/>
            <person name="Detter J.C."/>
            <person name="Munk A.C."/>
            <person name="Bruce D.C."/>
            <person name="Doggett N.A."/>
            <person name="Smith L.A."/>
            <person name="Marks J.D."/>
            <person name="Xie G."/>
            <person name="Brettin T.S."/>
        </authorList>
    </citation>
    <scope>NUCLEOTIDE SEQUENCE [LARGE SCALE GENOMIC DNA]</scope>
    <source>
        <strain>Loch Maree / Type A3</strain>
    </source>
</reference>
<feature type="chain" id="PRO_1000193007" description="Phosphoribosylformylglycinamidine cyclo-ligase">
    <location>
        <begin position="1"/>
        <end position="331"/>
    </location>
</feature>
<name>PUR5_CLOBM</name>
<organism>
    <name type="scientific">Clostridium botulinum (strain Loch Maree / Type A3)</name>
    <dbReference type="NCBI Taxonomy" id="498214"/>
    <lineage>
        <taxon>Bacteria</taxon>
        <taxon>Bacillati</taxon>
        <taxon>Bacillota</taxon>
        <taxon>Clostridia</taxon>
        <taxon>Eubacteriales</taxon>
        <taxon>Clostridiaceae</taxon>
        <taxon>Clostridium</taxon>
    </lineage>
</organism>
<dbReference type="EC" id="6.3.3.1" evidence="1"/>
<dbReference type="EMBL" id="CP000962">
    <property type="protein sequence ID" value="ACA54657.1"/>
    <property type="molecule type" value="Genomic_DNA"/>
</dbReference>
<dbReference type="RefSeq" id="WP_012342734.1">
    <property type="nucleotide sequence ID" value="NC_010520.1"/>
</dbReference>
<dbReference type="SMR" id="B1KZ57"/>
<dbReference type="KEGG" id="cbl:CLK_2271"/>
<dbReference type="HOGENOM" id="CLU_047116_0_0_9"/>
<dbReference type="UniPathway" id="UPA00074">
    <property type="reaction ID" value="UER00129"/>
</dbReference>
<dbReference type="GO" id="GO:0005829">
    <property type="term" value="C:cytosol"/>
    <property type="evidence" value="ECO:0007669"/>
    <property type="project" value="TreeGrafter"/>
</dbReference>
<dbReference type="GO" id="GO:0005524">
    <property type="term" value="F:ATP binding"/>
    <property type="evidence" value="ECO:0007669"/>
    <property type="project" value="UniProtKB-KW"/>
</dbReference>
<dbReference type="GO" id="GO:0004637">
    <property type="term" value="F:phosphoribosylamine-glycine ligase activity"/>
    <property type="evidence" value="ECO:0007669"/>
    <property type="project" value="TreeGrafter"/>
</dbReference>
<dbReference type="GO" id="GO:0004641">
    <property type="term" value="F:phosphoribosylformylglycinamidine cyclo-ligase activity"/>
    <property type="evidence" value="ECO:0007669"/>
    <property type="project" value="UniProtKB-UniRule"/>
</dbReference>
<dbReference type="GO" id="GO:0006189">
    <property type="term" value="P:'de novo' IMP biosynthetic process"/>
    <property type="evidence" value="ECO:0007669"/>
    <property type="project" value="UniProtKB-UniRule"/>
</dbReference>
<dbReference type="GO" id="GO:0046084">
    <property type="term" value="P:adenine biosynthetic process"/>
    <property type="evidence" value="ECO:0007669"/>
    <property type="project" value="TreeGrafter"/>
</dbReference>
<dbReference type="CDD" id="cd02196">
    <property type="entry name" value="PurM"/>
    <property type="match status" value="1"/>
</dbReference>
<dbReference type="FunFam" id="3.30.1330.10:FF:000001">
    <property type="entry name" value="Phosphoribosylformylglycinamidine cyclo-ligase"/>
    <property type="match status" value="1"/>
</dbReference>
<dbReference type="FunFam" id="3.90.650.10:FF:000011">
    <property type="entry name" value="Phosphoribosylformylglycinamidine cyclo-ligase"/>
    <property type="match status" value="1"/>
</dbReference>
<dbReference type="Gene3D" id="3.90.650.10">
    <property type="entry name" value="PurM-like C-terminal domain"/>
    <property type="match status" value="1"/>
</dbReference>
<dbReference type="Gene3D" id="3.30.1330.10">
    <property type="entry name" value="PurM-like, N-terminal domain"/>
    <property type="match status" value="1"/>
</dbReference>
<dbReference type="HAMAP" id="MF_00741">
    <property type="entry name" value="AIRS"/>
    <property type="match status" value="1"/>
</dbReference>
<dbReference type="InterPro" id="IPR010918">
    <property type="entry name" value="PurM-like_C_dom"/>
</dbReference>
<dbReference type="InterPro" id="IPR036676">
    <property type="entry name" value="PurM-like_C_sf"/>
</dbReference>
<dbReference type="InterPro" id="IPR016188">
    <property type="entry name" value="PurM-like_N"/>
</dbReference>
<dbReference type="InterPro" id="IPR036921">
    <property type="entry name" value="PurM-like_N_sf"/>
</dbReference>
<dbReference type="InterPro" id="IPR004733">
    <property type="entry name" value="PurM_cligase"/>
</dbReference>
<dbReference type="NCBIfam" id="TIGR00878">
    <property type="entry name" value="purM"/>
    <property type="match status" value="1"/>
</dbReference>
<dbReference type="PANTHER" id="PTHR10520:SF12">
    <property type="entry name" value="TRIFUNCTIONAL PURINE BIOSYNTHETIC PROTEIN ADENOSINE-3"/>
    <property type="match status" value="1"/>
</dbReference>
<dbReference type="PANTHER" id="PTHR10520">
    <property type="entry name" value="TRIFUNCTIONAL PURINE BIOSYNTHETIC PROTEIN ADENOSINE-3-RELATED"/>
    <property type="match status" value="1"/>
</dbReference>
<dbReference type="Pfam" id="PF00586">
    <property type="entry name" value="AIRS"/>
    <property type="match status" value="1"/>
</dbReference>
<dbReference type="Pfam" id="PF02769">
    <property type="entry name" value="AIRS_C"/>
    <property type="match status" value="1"/>
</dbReference>
<dbReference type="SUPFAM" id="SSF56042">
    <property type="entry name" value="PurM C-terminal domain-like"/>
    <property type="match status" value="1"/>
</dbReference>
<dbReference type="SUPFAM" id="SSF55326">
    <property type="entry name" value="PurM N-terminal domain-like"/>
    <property type="match status" value="1"/>
</dbReference>